<organism>
    <name type="scientific">Anaeromyxobacter dehalogenans (strain 2CP-1 / ATCC BAA-258)</name>
    <dbReference type="NCBI Taxonomy" id="455488"/>
    <lineage>
        <taxon>Bacteria</taxon>
        <taxon>Pseudomonadati</taxon>
        <taxon>Myxococcota</taxon>
        <taxon>Myxococcia</taxon>
        <taxon>Myxococcales</taxon>
        <taxon>Cystobacterineae</taxon>
        <taxon>Anaeromyxobacteraceae</taxon>
        <taxon>Anaeromyxobacter</taxon>
    </lineage>
</organism>
<reference key="1">
    <citation type="submission" date="2009-01" db="EMBL/GenBank/DDBJ databases">
        <title>Complete sequence of Anaeromyxobacter dehalogenans 2CP-1.</title>
        <authorList>
            <person name="Lucas S."/>
            <person name="Copeland A."/>
            <person name="Lapidus A."/>
            <person name="Glavina del Rio T."/>
            <person name="Dalin E."/>
            <person name="Tice H."/>
            <person name="Bruce D."/>
            <person name="Goodwin L."/>
            <person name="Pitluck S."/>
            <person name="Saunders E."/>
            <person name="Brettin T."/>
            <person name="Detter J.C."/>
            <person name="Han C."/>
            <person name="Larimer F."/>
            <person name="Land M."/>
            <person name="Hauser L."/>
            <person name="Kyrpides N."/>
            <person name="Ovchinnikova G."/>
            <person name="Beliaev A.S."/>
            <person name="Richardson P."/>
        </authorList>
    </citation>
    <scope>NUCLEOTIDE SEQUENCE [LARGE SCALE GENOMIC DNA]</scope>
    <source>
        <strain>2CP-1 / ATCC BAA-258</strain>
    </source>
</reference>
<comment type="similarity">
    <text evidence="1">Belongs to the CinA family.</text>
</comment>
<proteinExistence type="inferred from homology"/>
<protein>
    <recommendedName>
        <fullName evidence="1">CinA-like protein</fullName>
    </recommendedName>
</protein>
<evidence type="ECO:0000255" key="1">
    <source>
        <dbReference type="HAMAP-Rule" id="MF_00226"/>
    </source>
</evidence>
<sequence>MQVEILATGDELLTGQVVDTNSPWLMDRLWDLGLMVRRKTLVADDRDDLRAAILETTARADLVVMSGGMGPTEDDLTSECVAAVLGVPLERHEPSIEVLRERFRKFGRALTPNNEKQAWFPRGAEVIPNRWGSAPGFTVPVGRGRVVCLPGVPVEYRGLCEEWVLPHVGARLSEVPAAGLVKLFAVPESHADHAMRPVMDDPANAGVRFGYRAHWPETHVKWTVPGPDAAGRAARIRERVLGIFGEQVFGEGKDELPDLVVARLAARGERVALGESCTGGMVAELLTAVPGASAVLDLGVVAYANAAKERVLGVPAELLAAHGAVSEPVARALAEGARRAGGAAWGVGITGIAGPSGGTPEKPVGTVHLAVAGPSGTETVARAYRGDRDRVRRQAAYEALNLLRLALR</sequence>
<dbReference type="EMBL" id="CP001359">
    <property type="protein sequence ID" value="ACL67078.1"/>
    <property type="molecule type" value="Genomic_DNA"/>
</dbReference>
<dbReference type="RefSeq" id="WP_015934840.1">
    <property type="nucleotide sequence ID" value="NC_011891.1"/>
</dbReference>
<dbReference type="SMR" id="B8J6V6"/>
<dbReference type="KEGG" id="acp:A2cp1_3752"/>
<dbReference type="HOGENOM" id="CLU_030805_9_2_7"/>
<dbReference type="Proteomes" id="UP000007089">
    <property type="component" value="Chromosome"/>
</dbReference>
<dbReference type="CDD" id="cd00885">
    <property type="entry name" value="cinA"/>
    <property type="match status" value="1"/>
</dbReference>
<dbReference type="Gene3D" id="3.90.950.20">
    <property type="entry name" value="CinA-like"/>
    <property type="match status" value="1"/>
</dbReference>
<dbReference type="Gene3D" id="3.40.980.10">
    <property type="entry name" value="MoaB/Mog-like domain"/>
    <property type="match status" value="1"/>
</dbReference>
<dbReference type="HAMAP" id="MF_00226_B">
    <property type="entry name" value="CinA_B"/>
    <property type="match status" value="1"/>
</dbReference>
<dbReference type="InterPro" id="IPR050101">
    <property type="entry name" value="CinA"/>
</dbReference>
<dbReference type="InterPro" id="IPR036653">
    <property type="entry name" value="CinA-like_C"/>
</dbReference>
<dbReference type="InterPro" id="IPR008136">
    <property type="entry name" value="CinA_C"/>
</dbReference>
<dbReference type="InterPro" id="IPR008135">
    <property type="entry name" value="Competence-induced_CinA"/>
</dbReference>
<dbReference type="InterPro" id="IPR036425">
    <property type="entry name" value="MoaB/Mog-like_dom_sf"/>
</dbReference>
<dbReference type="InterPro" id="IPR001453">
    <property type="entry name" value="MoaB/Mog_dom"/>
</dbReference>
<dbReference type="NCBIfam" id="TIGR00200">
    <property type="entry name" value="cinA_nterm"/>
    <property type="match status" value="1"/>
</dbReference>
<dbReference type="NCBIfam" id="TIGR00177">
    <property type="entry name" value="molyb_syn"/>
    <property type="match status" value="1"/>
</dbReference>
<dbReference type="NCBIfam" id="TIGR00199">
    <property type="entry name" value="PncC_domain"/>
    <property type="match status" value="1"/>
</dbReference>
<dbReference type="PANTHER" id="PTHR13939">
    <property type="entry name" value="NICOTINAMIDE-NUCLEOTIDE AMIDOHYDROLASE PNCC"/>
    <property type="match status" value="1"/>
</dbReference>
<dbReference type="PANTHER" id="PTHR13939:SF0">
    <property type="entry name" value="NMN AMIDOHYDROLASE-LIKE PROTEIN YFAY"/>
    <property type="match status" value="1"/>
</dbReference>
<dbReference type="Pfam" id="PF02464">
    <property type="entry name" value="CinA"/>
    <property type="match status" value="1"/>
</dbReference>
<dbReference type="Pfam" id="PF00994">
    <property type="entry name" value="MoCF_biosynth"/>
    <property type="match status" value="1"/>
</dbReference>
<dbReference type="PIRSF" id="PIRSF006728">
    <property type="entry name" value="CinA"/>
    <property type="match status" value="1"/>
</dbReference>
<dbReference type="SMART" id="SM00852">
    <property type="entry name" value="MoCF_biosynth"/>
    <property type="match status" value="1"/>
</dbReference>
<dbReference type="SUPFAM" id="SSF142433">
    <property type="entry name" value="CinA-like"/>
    <property type="match status" value="1"/>
</dbReference>
<dbReference type="SUPFAM" id="SSF53218">
    <property type="entry name" value="Molybdenum cofactor biosynthesis proteins"/>
    <property type="match status" value="1"/>
</dbReference>
<gene>
    <name type="ordered locus">A2cp1_3752</name>
</gene>
<accession>B8J6V6</accession>
<feature type="chain" id="PRO_1000124972" description="CinA-like protein">
    <location>
        <begin position="1"/>
        <end position="408"/>
    </location>
</feature>
<name>CINAL_ANAD2</name>